<gene>
    <name evidence="1" type="primary">dapE</name>
    <name type="ordered locus">Patl_2192</name>
</gene>
<proteinExistence type="inferred from homology"/>
<name>DAPE_PSEA6</name>
<dbReference type="EC" id="3.5.1.18" evidence="1"/>
<dbReference type="EMBL" id="CP000388">
    <property type="protein sequence ID" value="ABG40710.1"/>
    <property type="molecule type" value="Genomic_DNA"/>
</dbReference>
<dbReference type="RefSeq" id="WP_011574994.1">
    <property type="nucleotide sequence ID" value="NC_008228.1"/>
</dbReference>
<dbReference type="SMR" id="Q15TS8"/>
<dbReference type="STRING" id="342610.Patl_2192"/>
<dbReference type="KEGG" id="pat:Patl_2192"/>
<dbReference type="eggNOG" id="COG0624">
    <property type="taxonomic scope" value="Bacteria"/>
</dbReference>
<dbReference type="HOGENOM" id="CLU_021802_4_0_6"/>
<dbReference type="OrthoDB" id="9809784at2"/>
<dbReference type="UniPathway" id="UPA00034">
    <property type="reaction ID" value="UER00021"/>
</dbReference>
<dbReference type="Proteomes" id="UP000001981">
    <property type="component" value="Chromosome"/>
</dbReference>
<dbReference type="GO" id="GO:0008777">
    <property type="term" value="F:acetylornithine deacetylase activity"/>
    <property type="evidence" value="ECO:0007669"/>
    <property type="project" value="TreeGrafter"/>
</dbReference>
<dbReference type="GO" id="GO:0050897">
    <property type="term" value="F:cobalt ion binding"/>
    <property type="evidence" value="ECO:0007669"/>
    <property type="project" value="UniProtKB-UniRule"/>
</dbReference>
<dbReference type="GO" id="GO:0009014">
    <property type="term" value="F:succinyl-diaminopimelate desuccinylase activity"/>
    <property type="evidence" value="ECO:0007669"/>
    <property type="project" value="UniProtKB-UniRule"/>
</dbReference>
<dbReference type="GO" id="GO:0008270">
    <property type="term" value="F:zinc ion binding"/>
    <property type="evidence" value="ECO:0007669"/>
    <property type="project" value="UniProtKB-UniRule"/>
</dbReference>
<dbReference type="GO" id="GO:0019877">
    <property type="term" value="P:diaminopimelate biosynthetic process"/>
    <property type="evidence" value="ECO:0007669"/>
    <property type="project" value="UniProtKB-UniRule"/>
</dbReference>
<dbReference type="GO" id="GO:0006526">
    <property type="term" value="P:L-arginine biosynthetic process"/>
    <property type="evidence" value="ECO:0007669"/>
    <property type="project" value="TreeGrafter"/>
</dbReference>
<dbReference type="GO" id="GO:0009089">
    <property type="term" value="P:lysine biosynthetic process via diaminopimelate"/>
    <property type="evidence" value="ECO:0007669"/>
    <property type="project" value="UniProtKB-UniRule"/>
</dbReference>
<dbReference type="CDD" id="cd03891">
    <property type="entry name" value="M20_DapE_proteobac"/>
    <property type="match status" value="1"/>
</dbReference>
<dbReference type="FunFam" id="3.40.630.10:FF:000005">
    <property type="entry name" value="Succinyl-diaminopimelate desuccinylase"/>
    <property type="match status" value="1"/>
</dbReference>
<dbReference type="Gene3D" id="3.40.630.10">
    <property type="entry name" value="Zn peptidases"/>
    <property type="match status" value="2"/>
</dbReference>
<dbReference type="HAMAP" id="MF_01690">
    <property type="entry name" value="DapE"/>
    <property type="match status" value="1"/>
</dbReference>
<dbReference type="InterPro" id="IPR001261">
    <property type="entry name" value="ArgE/DapE_CS"/>
</dbReference>
<dbReference type="InterPro" id="IPR036264">
    <property type="entry name" value="Bact_exopeptidase_dim_dom"/>
</dbReference>
<dbReference type="InterPro" id="IPR005941">
    <property type="entry name" value="DapE_proteobac"/>
</dbReference>
<dbReference type="InterPro" id="IPR002933">
    <property type="entry name" value="Peptidase_M20"/>
</dbReference>
<dbReference type="InterPro" id="IPR011650">
    <property type="entry name" value="Peptidase_M20_dimer"/>
</dbReference>
<dbReference type="InterPro" id="IPR050072">
    <property type="entry name" value="Peptidase_M20A"/>
</dbReference>
<dbReference type="NCBIfam" id="TIGR01246">
    <property type="entry name" value="dapE_proteo"/>
    <property type="match status" value="1"/>
</dbReference>
<dbReference type="NCBIfam" id="NF009557">
    <property type="entry name" value="PRK13009.1"/>
    <property type="match status" value="1"/>
</dbReference>
<dbReference type="PANTHER" id="PTHR43808">
    <property type="entry name" value="ACETYLORNITHINE DEACETYLASE"/>
    <property type="match status" value="1"/>
</dbReference>
<dbReference type="PANTHER" id="PTHR43808:SF31">
    <property type="entry name" value="N-ACETYL-L-CITRULLINE DEACETYLASE"/>
    <property type="match status" value="1"/>
</dbReference>
<dbReference type="Pfam" id="PF07687">
    <property type="entry name" value="M20_dimer"/>
    <property type="match status" value="1"/>
</dbReference>
<dbReference type="Pfam" id="PF01546">
    <property type="entry name" value="Peptidase_M20"/>
    <property type="match status" value="1"/>
</dbReference>
<dbReference type="SUPFAM" id="SSF55031">
    <property type="entry name" value="Bacterial exopeptidase dimerisation domain"/>
    <property type="match status" value="1"/>
</dbReference>
<dbReference type="SUPFAM" id="SSF53187">
    <property type="entry name" value="Zn-dependent exopeptidases"/>
    <property type="match status" value="1"/>
</dbReference>
<dbReference type="PROSITE" id="PS00759">
    <property type="entry name" value="ARGE_DAPE_CPG2_2"/>
    <property type="match status" value="1"/>
</dbReference>
<reference key="1">
    <citation type="submission" date="2006-06" db="EMBL/GenBank/DDBJ databases">
        <title>Complete sequence of Pseudoalteromonas atlantica T6c.</title>
        <authorList>
            <consortium name="US DOE Joint Genome Institute"/>
            <person name="Copeland A."/>
            <person name="Lucas S."/>
            <person name="Lapidus A."/>
            <person name="Barry K."/>
            <person name="Detter J.C."/>
            <person name="Glavina del Rio T."/>
            <person name="Hammon N."/>
            <person name="Israni S."/>
            <person name="Dalin E."/>
            <person name="Tice H."/>
            <person name="Pitluck S."/>
            <person name="Saunders E."/>
            <person name="Brettin T."/>
            <person name="Bruce D."/>
            <person name="Han C."/>
            <person name="Tapia R."/>
            <person name="Gilna P."/>
            <person name="Schmutz J."/>
            <person name="Larimer F."/>
            <person name="Land M."/>
            <person name="Hauser L."/>
            <person name="Kyrpides N."/>
            <person name="Kim E."/>
            <person name="Karls A.C."/>
            <person name="Bartlett D."/>
            <person name="Higgins B.P."/>
            <person name="Richardson P."/>
        </authorList>
    </citation>
    <scope>NUCLEOTIDE SEQUENCE [LARGE SCALE GENOMIC DNA]</scope>
    <source>
        <strain>T6c / ATCC BAA-1087</strain>
    </source>
</reference>
<protein>
    <recommendedName>
        <fullName evidence="1">Succinyl-diaminopimelate desuccinylase</fullName>
        <shortName evidence="1">SDAP desuccinylase</shortName>
        <ecNumber evidence="1">3.5.1.18</ecNumber>
    </recommendedName>
    <alternativeName>
        <fullName evidence="1">N-succinyl-LL-2,6-diaminoheptanedioate amidohydrolase</fullName>
    </alternativeName>
</protein>
<keyword id="KW-0028">Amino-acid biosynthesis</keyword>
<keyword id="KW-0170">Cobalt</keyword>
<keyword id="KW-0220">Diaminopimelate biosynthesis</keyword>
<keyword id="KW-0378">Hydrolase</keyword>
<keyword id="KW-0457">Lysine biosynthesis</keyword>
<keyword id="KW-0479">Metal-binding</keyword>
<keyword id="KW-0862">Zinc</keyword>
<accession>Q15TS8</accession>
<comment type="function">
    <text evidence="1">Catalyzes the hydrolysis of N-succinyl-L,L-diaminopimelic acid (SDAP), forming succinate and LL-2,6-diaminopimelate (DAP), an intermediate involved in the bacterial biosynthesis of lysine and meso-diaminopimelic acid, an essential component of bacterial cell walls.</text>
</comment>
<comment type="catalytic activity">
    <reaction evidence="1">
        <text>N-succinyl-(2S,6S)-2,6-diaminopimelate + H2O = (2S,6S)-2,6-diaminopimelate + succinate</text>
        <dbReference type="Rhea" id="RHEA:22608"/>
        <dbReference type="ChEBI" id="CHEBI:15377"/>
        <dbReference type="ChEBI" id="CHEBI:30031"/>
        <dbReference type="ChEBI" id="CHEBI:57609"/>
        <dbReference type="ChEBI" id="CHEBI:58087"/>
        <dbReference type="EC" id="3.5.1.18"/>
    </reaction>
</comment>
<comment type="cofactor">
    <cofactor evidence="1">
        <name>Zn(2+)</name>
        <dbReference type="ChEBI" id="CHEBI:29105"/>
    </cofactor>
    <cofactor evidence="1">
        <name>Co(2+)</name>
        <dbReference type="ChEBI" id="CHEBI:48828"/>
    </cofactor>
    <text evidence="1">Binds 2 Zn(2+) or Co(2+) ions per subunit.</text>
</comment>
<comment type="pathway">
    <text evidence="1">Amino-acid biosynthesis; L-lysine biosynthesis via DAP pathway; LL-2,6-diaminopimelate from (S)-tetrahydrodipicolinate (succinylase route): step 3/3.</text>
</comment>
<comment type="subunit">
    <text evidence="1">Homodimer.</text>
</comment>
<comment type="similarity">
    <text evidence="1">Belongs to the peptidase M20A family. DapE subfamily.</text>
</comment>
<sequence>MSCEVLALTEELINRQSVTPEDAGCQQLMAEYLAPLGFDIESMVFDDTTNMWARKGTGGPVFCFAGHTDVVPSGPAEKWTFPPFTATQHEGQLYGRGAADMKGSLAAMLVATKAFVTKHPEHSGSIAFLITSDEEGPFINGTTRVIDTLEARNEKMTWCLVGEPSSTTLIGDVVKNGRRGSLTGDITVKGVQGHVAYPHLAKNPIHLSAPAFAELAQTHWDSGNASFPPTSFQVSNINSGTGAGNVIPGDLSACFNFRFSTEVTDKQLIERVTTILDKYDFDYHIDWTFNGQPFLTDSGKLVEATQSAIKDVTGRETELSTAGGTSDGRFIAPTGAQVIELGPINATIHKIDENVNINDLAQLAKIYEGILQRLLA</sequence>
<evidence type="ECO:0000255" key="1">
    <source>
        <dbReference type="HAMAP-Rule" id="MF_01690"/>
    </source>
</evidence>
<feature type="chain" id="PRO_0000375651" description="Succinyl-diaminopimelate desuccinylase">
    <location>
        <begin position="1"/>
        <end position="376"/>
    </location>
</feature>
<feature type="active site" evidence="1">
    <location>
        <position position="69"/>
    </location>
</feature>
<feature type="active site" description="Proton acceptor" evidence="1">
    <location>
        <position position="134"/>
    </location>
</feature>
<feature type="binding site" evidence="1">
    <location>
        <position position="67"/>
    </location>
    <ligand>
        <name>Zn(2+)</name>
        <dbReference type="ChEBI" id="CHEBI:29105"/>
        <label>1</label>
    </ligand>
</feature>
<feature type="binding site" evidence="1">
    <location>
        <position position="100"/>
    </location>
    <ligand>
        <name>Zn(2+)</name>
        <dbReference type="ChEBI" id="CHEBI:29105"/>
        <label>1</label>
    </ligand>
</feature>
<feature type="binding site" evidence="1">
    <location>
        <position position="100"/>
    </location>
    <ligand>
        <name>Zn(2+)</name>
        <dbReference type="ChEBI" id="CHEBI:29105"/>
        <label>2</label>
    </ligand>
</feature>
<feature type="binding site" evidence="1">
    <location>
        <position position="135"/>
    </location>
    <ligand>
        <name>Zn(2+)</name>
        <dbReference type="ChEBI" id="CHEBI:29105"/>
        <label>2</label>
    </ligand>
</feature>
<feature type="binding site" evidence="1">
    <location>
        <position position="163"/>
    </location>
    <ligand>
        <name>Zn(2+)</name>
        <dbReference type="ChEBI" id="CHEBI:29105"/>
        <label>1</label>
    </ligand>
</feature>
<feature type="binding site" evidence="1">
    <location>
        <position position="349"/>
    </location>
    <ligand>
        <name>Zn(2+)</name>
        <dbReference type="ChEBI" id="CHEBI:29105"/>
        <label>2</label>
    </ligand>
</feature>
<organism>
    <name type="scientific">Pseudoalteromonas atlantica (strain T6c / ATCC BAA-1087)</name>
    <dbReference type="NCBI Taxonomy" id="3042615"/>
    <lineage>
        <taxon>Bacteria</taxon>
        <taxon>Pseudomonadati</taxon>
        <taxon>Pseudomonadota</taxon>
        <taxon>Gammaproteobacteria</taxon>
        <taxon>Alteromonadales</taxon>
        <taxon>Alteromonadaceae</taxon>
        <taxon>Paraglaciecola</taxon>
    </lineage>
</organism>